<dbReference type="EC" id="4.1.1.65" evidence="1"/>
<dbReference type="EMBL" id="CP001252">
    <property type="protein sequence ID" value="ACK48197.1"/>
    <property type="molecule type" value="Genomic_DNA"/>
</dbReference>
<dbReference type="SMR" id="B8ECB2"/>
<dbReference type="KEGG" id="sbp:Sbal223_3719"/>
<dbReference type="HOGENOM" id="CLU_029061_4_1_6"/>
<dbReference type="UniPathway" id="UPA00558">
    <property type="reaction ID" value="UER00616"/>
</dbReference>
<dbReference type="Proteomes" id="UP000002507">
    <property type="component" value="Chromosome"/>
</dbReference>
<dbReference type="GO" id="GO:0005886">
    <property type="term" value="C:plasma membrane"/>
    <property type="evidence" value="ECO:0007669"/>
    <property type="project" value="UniProtKB-SubCell"/>
</dbReference>
<dbReference type="GO" id="GO:0004609">
    <property type="term" value="F:phosphatidylserine decarboxylase activity"/>
    <property type="evidence" value="ECO:0007669"/>
    <property type="project" value="UniProtKB-UniRule"/>
</dbReference>
<dbReference type="GO" id="GO:0006646">
    <property type="term" value="P:phosphatidylethanolamine biosynthetic process"/>
    <property type="evidence" value="ECO:0007669"/>
    <property type="project" value="UniProtKB-UniRule"/>
</dbReference>
<dbReference type="HAMAP" id="MF_00662">
    <property type="entry name" value="PS_decarb_PSD_B_type1"/>
    <property type="match status" value="1"/>
</dbReference>
<dbReference type="InterPro" id="IPR003817">
    <property type="entry name" value="PS_Dcarbxylase"/>
</dbReference>
<dbReference type="InterPro" id="IPR033177">
    <property type="entry name" value="PSD-B"/>
</dbReference>
<dbReference type="InterPro" id="IPR033178">
    <property type="entry name" value="PSD_type1_pro"/>
</dbReference>
<dbReference type="NCBIfam" id="TIGR00163">
    <property type="entry name" value="PS_decarb"/>
    <property type="match status" value="1"/>
</dbReference>
<dbReference type="PANTHER" id="PTHR10067">
    <property type="entry name" value="PHOSPHATIDYLSERINE DECARBOXYLASE"/>
    <property type="match status" value="1"/>
</dbReference>
<dbReference type="PANTHER" id="PTHR10067:SF6">
    <property type="entry name" value="PHOSPHATIDYLSERINE DECARBOXYLASE PROENZYME, MITOCHONDRIAL"/>
    <property type="match status" value="1"/>
</dbReference>
<dbReference type="Pfam" id="PF02666">
    <property type="entry name" value="PS_Dcarbxylase"/>
    <property type="match status" value="1"/>
</dbReference>
<organism>
    <name type="scientific">Shewanella baltica (strain OS223)</name>
    <dbReference type="NCBI Taxonomy" id="407976"/>
    <lineage>
        <taxon>Bacteria</taxon>
        <taxon>Pseudomonadati</taxon>
        <taxon>Pseudomonadota</taxon>
        <taxon>Gammaproteobacteria</taxon>
        <taxon>Alteromonadales</taxon>
        <taxon>Shewanellaceae</taxon>
        <taxon>Shewanella</taxon>
    </lineage>
</organism>
<feature type="chain" id="PRO_1000147609" description="Phosphatidylserine decarboxylase beta chain" evidence="1">
    <location>
        <begin position="1"/>
        <end position="251"/>
    </location>
</feature>
<feature type="chain" id="PRO_1000147610" description="Phosphatidylserine decarboxylase alpha chain" evidence="1">
    <location>
        <begin position="252"/>
        <end position="292"/>
    </location>
</feature>
<feature type="active site" description="Charge relay system; for autoendoproteolytic cleavage activity" evidence="1">
    <location>
        <position position="89"/>
    </location>
</feature>
<feature type="active site" description="Charge relay system; for autoendoproteolytic cleavage activity" evidence="1">
    <location>
        <position position="146"/>
    </location>
</feature>
<feature type="active site" description="Charge relay system; for autoendoproteolytic cleavage activity" evidence="1">
    <location>
        <position position="252"/>
    </location>
</feature>
<feature type="active site" description="Schiff-base intermediate with substrate; via pyruvic acid; for decarboxylase activity" evidence="1">
    <location>
        <position position="252"/>
    </location>
</feature>
<feature type="site" description="Cleavage (non-hydrolytic); by autocatalysis" evidence="1">
    <location>
        <begin position="251"/>
        <end position="252"/>
    </location>
</feature>
<feature type="modified residue" description="Pyruvic acid (Ser); by autocatalysis" evidence="1">
    <location>
        <position position="252"/>
    </location>
</feature>
<gene>
    <name evidence="1" type="primary">psd</name>
    <name type="ordered locus">Sbal223_3719</name>
</gene>
<sequence length="292" mass="31850">MDKVKIALQYMLPKHLLSRLVGKLAAAEAGALTTAAIKWFIKQYKIDMSEAAQSEPEAYKSFNAFFTRALKPGIRPLDMDADIMVHPVDGAVSQLGPIKNGRIFQAKGHHYSSLTLLGDQAEDAKRFEGGDFATIYLAPKDYHRIHMPIKGTLSKMTYVPGELFSVNPLTARNVPGLFARNERVVAIFETELGPLAMVLVGATIVASIETVWAGTVTPPTGKQVFTWEYPTQGPDAITLDKGEEMGRFKLGSTVVMLFAKDAIATFAEGVEAEAVTRMGQAFANLKDVKQAD</sequence>
<comment type="function">
    <text evidence="1">Catalyzes the formation of phosphatidylethanolamine (PtdEtn) from phosphatidylserine (PtdSer).</text>
</comment>
<comment type="catalytic activity">
    <reaction evidence="1">
        <text>a 1,2-diacyl-sn-glycero-3-phospho-L-serine + H(+) = a 1,2-diacyl-sn-glycero-3-phosphoethanolamine + CO2</text>
        <dbReference type="Rhea" id="RHEA:20828"/>
        <dbReference type="ChEBI" id="CHEBI:15378"/>
        <dbReference type="ChEBI" id="CHEBI:16526"/>
        <dbReference type="ChEBI" id="CHEBI:57262"/>
        <dbReference type="ChEBI" id="CHEBI:64612"/>
        <dbReference type="EC" id="4.1.1.65"/>
    </reaction>
</comment>
<comment type="cofactor">
    <cofactor evidence="1">
        <name>pyruvate</name>
        <dbReference type="ChEBI" id="CHEBI:15361"/>
    </cofactor>
    <text evidence="1">Binds 1 pyruvoyl group covalently per subunit.</text>
</comment>
<comment type="pathway">
    <text evidence="1">Phospholipid metabolism; phosphatidylethanolamine biosynthesis; phosphatidylethanolamine from CDP-diacylglycerol: step 2/2.</text>
</comment>
<comment type="subunit">
    <text evidence="1">Heterodimer of a large membrane-associated beta subunit and a small pyruvoyl-containing alpha subunit.</text>
</comment>
<comment type="subcellular location">
    <subcellularLocation>
        <location evidence="1">Cell membrane</location>
        <topology evidence="1">Peripheral membrane protein</topology>
    </subcellularLocation>
</comment>
<comment type="PTM">
    <text evidence="1">Is synthesized initially as an inactive proenzyme. Formation of the active enzyme involves a self-maturation process in which the active site pyruvoyl group is generated from an internal serine residue via an autocatalytic post-translational modification. Two non-identical subunits are generated from the proenzyme in this reaction, and the pyruvate is formed at the N-terminus of the alpha chain, which is derived from the carboxyl end of the proenzyme. The autoendoproteolytic cleavage occurs by a canonical serine protease mechanism, in which the side chain hydroxyl group of the serine supplies its oxygen atom to form the C-terminus of the beta chain, while the remainder of the serine residue undergoes an oxidative deamination to produce ammonia and the pyruvoyl prosthetic group on the alpha chain. During this reaction, the Ser that is part of the protease active site of the proenzyme becomes the pyruvoyl prosthetic group, which constitutes an essential element of the active site of the mature decarboxylase.</text>
</comment>
<comment type="similarity">
    <text evidence="1">Belongs to the phosphatidylserine decarboxylase family. PSD-B subfamily. Prokaryotic type I sub-subfamily.</text>
</comment>
<protein>
    <recommendedName>
        <fullName evidence="1">Phosphatidylserine decarboxylase proenzyme</fullName>
        <ecNumber evidence="1">4.1.1.65</ecNumber>
    </recommendedName>
    <component>
        <recommendedName>
            <fullName evidence="1">Phosphatidylserine decarboxylase alpha chain</fullName>
        </recommendedName>
    </component>
    <component>
        <recommendedName>
            <fullName evidence="1">Phosphatidylserine decarboxylase beta chain</fullName>
        </recommendedName>
    </component>
</protein>
<proteinExistence type="inferred from homology"/>
<name>PSD_SHEB2</name>
<accession>B8ECB2</accession>
<keyword id="KW-1003">Cell membrane</keyword>
<keyword id="KW-0210">Decarboxylase</keyword>
<keyword id="KW-0444">Lipid biosynthesis</keyword>
<keyword id="KW-0443">Lipid metabolism</keyword>
<keyword id="KW-0456">Lyase</keyword>
<keyword id="KW-0472">Membrane</keyword>
<keyword id="KW-0594">Phospholipid biosynthesis</keyword>
<keyword id="KW-1208">Phospholipid metabolism</keyword>
<keyword id="KW-0670">Pyruvate</keyword>
<keyword id="KW-0865">Zymogen</keyword>
<reference key="1">
    <citation type="submission" date="2008-12" db="EMBL/GenBank/DDBJ databases">
        <title>Complete sequence of chromosome of Shewanella baltica OS223.</title>
        <authorList>
            <consortium name="US DOE Joint Genome Institute"/>
            <person name="Lucas S."/>
            <person name="Copeland A."/>
            <person name="Lapidus A."/>
            <person name="Glavina del Rio T."/>
            <person name="Dalin E."/>
            <person name="Tice H."/>
            <person name="Bruce D."/>
            <person name="Goodwin L."/>
            <person name="Pitluck S."/>
            <person name="Chertkov O."/>
            <person name="Meincke L."/>
            <person name="Brettin T."/>
            <person name="Detter J.C."/>
            <person name="Han C."/>
            <person name="Kuske C.R."/>
            <person name="Larimer F."/>
            <person name="Land M."/>
            <person name="Hauser L."/>
            <person name="Kyrpides N."/>
            <person name="Ovchinnikova G."/>
            <person name="Brettar I."/>
            <person name="Rodrigues J."/>
            <person name="Konstantinidis K."/>
            <person name="Tiedje J."/>
        </authorList>
    </citation>
    <scope>NUCLEOTIDE SEQUENCE [LARGE SCALE GENOMIC DNA]</scope>
    <source>
        <strain>OS223</strain>
    </source>
</reference>
<evidence type="ECO:0000255" key="1">
    <source>
        <dbReference type="HAMAP-Rule" id="MF_00662"/>
    </source>
</evidence>